<accession>Q03R43</accession>
<dbReference type="EC" id="6.1.1.7" evidence="1"/>
<dbReference type="EMBL" id="CP000416">
    <property type="protein sequence ID" value="ABJ64329.1"/>
    <property type="molecule type" value="Genomic_DNA"/>
</dbReference>
<dbReference type="RefSeq" id="WP_011667959.1">
    <property type="nucleotide sequence ID" value="NC_008497.1"/>
</dbReference>
<dbReference type="SMR" id="Q03R43"/>
<dbReference type="STRING" id="387344.LVIS_1223"/>
<dbReference type="KEGG" id="lbr:LVIS_1223"/>
<dbReference type="PATRIC" id="fig|387344.15.peg.1162"/>
<dbReference type="eggNOG" id="COG0013">
    <property type="taxonomic scope" value="Bacteria"/>
</dbReference>
<dbReference type="HOGENOM" id="CLU_004485_1_1_9"/>
<dbReference type="Proteomes" id="UP000001652">
    <property type="component" value="Chromosome"/>
</dbReference>
<dbReference type="GO" id="GO:0005829">
    <property type="term" value="C:cytosol"/>
    <property type="evidence" value="ECO:0007669"/>
    <property type="project" value="TreeGrafter"/>
</dbReference>
<dbReference type="GO" id="GO:0004813">
    <property type="term" value="F:alanine-tRNA ligase activity"/>
    <property type="evidence" value="ECO:0007669"/>
    <property type="project" value="UniProtKB-UniRule"/>
</dbReference>
<dbReference type="GO" id="GO:0002161">
    <property type="term" value="F:aminoacyl-tRNA deacylase activity"/>
    <property type="evidence" value="ECO:0007669"/>
    <property type="project" value="TreeGrafter"/>
</dbReference>
<dbReference type="GO" id="GO:0005524">
    <property type="term" value="F:ATP binding"/>
    <property type="evidence" value="ECO:0007669"/>
    <property type="project" value="UniProtKB-UniRule"/>
</dbReference>
<dbReference type="GO" id="GO:0140096">
    <property type="term" value="F:catalytic activity, acting on a protein"/>
    <property type="evidence" value="ECO:0007669"/>
    <property type="project" value="UniProtKB-ARBA"/>
</dbReference>
<dbReference type="GO" id="GO:0016740">
    <property type="term" value="F:transferase activity"/>
    <property type="evidence" value="ECO:0007669"/>
    <property type="project" value="UniProtKB-ARBA"/>
</dbReference>
<dbReference type="GO" id="GO:0000049">
    <property type="term" value="F:tRNA binding"/>
    <property type="evidence" value="ECO:0007669"/>
    <property type="project" value="UniProtKB-KW"/>
</dbReference>
<dbReference type="GO" id="GO:0008270">
    <property type="term" value="F:zinc ion binding"/>
    <property type="evidence" value="ECO:0007669"/>
    <property type="project" value="UniProtKB-UniRule"/>
</dbReference>
<dbReference type="GO" id="GO:0006419">
    <property type="term" value="P:alanyl-tRNA aminoacylation"/>
    <property type="evidence" value="ECO:0007669"/>
    <property type="project" value="UniProtKB-UniRule"/>
</dbReference>
<dbReference type="CDD" id="cd00673">
    <property type="entry name" value="AlaRS_core"/>
    <property type="match status" value="1"/>
</dbReference>
<dbReference type="FunFam" id="3.10.310.40:FF:000001">
    <property type="entry name" value="Alanine--tRNA ligase"/>
    <property type="match status" value="1"/>
</dbReference>
<dbReference type="FunFam" id="3.30.54.20:FF:000001">
    <property type="entry name" value="Alanine--tRNA ligase"/>
    <property type="match status" value="1"/>
</dbReference>
<dbReference type="FunFam" id="3.30.930.10:FF:000046">
    <property type="entry name" value="Alanine--tRNA ligase"/>
    <property type="match status" value="1"/>
</dbReference>
<dbReference type="FunFam" id="3.30.980.10:FF:000004">
    <property type="entry name" value="Alanine--tRNA ligase, cytoplasmic"/>
    <property type="match status" value="1"/>
</dbReference>
<dbReference type="Gene3D" id="2.40.30.130">
    <property type="match status" value="1"/>
</dbReference>
<dbReference type="Gene3D" id="3.10.310.40">
    <property type="match status" value="1"/>
</dbReference>
<dbReference type="Gene3D" id="3.30.54.20">
    <property type="match status" value="1"/>
</dbReference>
<dbReference type="Gene3D" id="6.10.250.550">
    <property type="match status" value="1"/>
</dbReference>
<dbReference type="Gene3D" id="3.30.930.10">
    <property type="entry name" value="Bira Bifunctional Protein, Domain 2"/>
    <property type="match status" value="1"/>
</dbReference>
<dbReference type="Gene3D" id="3.30.980.10">
    <property type="entry name" value="Threonyl-trna Synthetase, Chain A, domain 2"/>
    <property type="match status" value="1"/>
</dbReference>
<dbReference type="HAMAP" id="MF_00036_B">
    <property type="entry name" value="Ala_tRNA_synth_B"/>
    <property type="match status" value="1"/>
</dbReference>
<dbReference type="InterPro" id="IPR045864">
    <property type="entry name" value="aa-tRNA-synth_II/BPL/LPL"/>
</dbReference>
<dbReference type="InterPro" id="IPR002318">
    <property type="entry name" value="Ala-tRNA-lgiase_IIc"/>
</dbReference>
<dbReference type="InterPro" id="IPR018162">
    <property type="entry name" value="Ala-tRNA-ligase_IIc_anticod-bd"/>
</dbReference>
<dbReference type="InterPro" id="IPR018165">
    <property type="entry name" value="Ala-tRNA-synth_IIc_core"/>
</dbReference>
<dbReference type="InterPro" id="IPR018164">
    <property type="entry name" value="Ala-tRNA-synth_IIc_N"/>
</dbReference>
<dbReference type="InterPro" id="IPR050058">
    <property type="entry name" value="Ala-tRNA_ligase"/>
</dbReference>
<dbReference type="InterPro" id="IPR023033">
    <property type="entry name" value="Ala_tRNA_ligase_euk/bac"/>
</dbReference>
<dbReference type="InterPro" id="IPR003156">
    <property type="entry name" value="DHHA1_dom"/>
</dbReference>
<dbReference type="InterPro" id="IPR018163">
    <property type="entry name" value="Thr/Ala-tRNA-synth_IIc_edit"/>
</dbReference>
<dbReference type="InterPro" id="IPR009000">
    <property type="entry name" value="Transl_B-barrel_sf"/>
</dbReference>
<dbReference type="InterPro" id="IPR012947">
    <property type="entry name" value="tRNA_SAD"/>
</dbReference>
<dbReference type="NCBIfam" id="TIGR00344">
    <property type="entry name" value="alaS"/>
    <property type="match status" value="1"/>
</dbReference>
<dbReference type="PANTHER" id="PTHR11777:SF9">
    <property type="entry name" value="ALANINE--TRNA LIGASE, CYTOPLASMIC"/>
    <property type="match status" value="1"/>
</dbReference>
<dbReference type="PANTHER" id="PTHR11777">
    <property type="entry name" value="ALANYL-TRNA SYNTHETASE"/>
    <property type="match status" value="1"/>
</dbReference>
<dbReference type="Pfam" id="PF02272">
    <property type="entry name" value="DHHA1"/>
    <property type="match status" value="1"/>
</dbReference>
<dbReference type="Pfam" id="PF01411">
    <property type="entry name" value="tRNA-synt_2c"/>
    <property type="match status" value="1"/>
</dbReference>
<dbReference type="Pfam" id="PF07973">
    <property type="entry name" value="tRNA_SAD"/>
    <property type="match status" value="1"/>
</dbReference>
<dbReference type="PRINTS" id="PR00980">
    <property type="entry name" value="TRNASYNTHALA"/>
</dbReference>
<dbReference type="SMART" id="SM00863">
    <property type="entry name" value="tRNA_SAD"/>
    <property type="match status" value="1"/>
</dbReference>
<dbReference type="SUPFAM" id="SSF55681">
    <property type="entry name" value="Class II aaRS and biotin synthetases"/>
    <property type="match status" value="1"/>
</dbReference>
<dbReference type="SUPFAM" id="SSF101353">
    <property type="entry name" value="Putative anticodon-binding domain of alanyl-tRNA synthetase (AlaRS)"/>
    <property type="match status" value="1"/>
</dbReference>
<dbReference type="SUPFAM" id="SSF55186">
    <property type="entry name" value="ThrRS/AlaRS common domain"/>
    <property type="match status" value="1"/>
</dbReference>
<dbReference type="SUPFAM" id="SSF50447">
    <property type="entry name" value="Translation proteins"/>
    <property type="match status" value="1"/>
</dbReference>
<dbReference type="PROSITE" id="PS50860">
    <property type="entry name" value="AA_TRNA_LIGASE_II_ALA"/>
    <property type="match status" value="1"/>
</dbReference>
<feature type="chain" id="PRO_0000347643" description="Alanine--tRNA ligase">
    <location>
        <begin position="1"/>
        <end position="879"/>
    </location>
</feature>
<feature type="binding site" evidence="1">
    <location>
        <position position="567"/>
    </location>
    <ligand>
        <name>Zn(2+)</name>
        <dbReference type="ChEBI" id="CHEBI:29105"/>
    </ligand>
</feature>
<feature type="binding site" evidence="1">
    <location>
        <position position="571"/>
    </location>
    <ligand>
        <name>Zn(2+)</name>
        <dbReference type="ChEBI" id="CHEBI:29105"/>
    </ligand>
</feature>
<feature type="binding site" evidence="1">
    <location>
        <position position="669"/>
    </location>
    <ligand>
        <name>Zn(2+)</name>
        <dbReference type="ChEBI" id="CHEBI:29105"/>
    </ligand>
</feature>
<feature type="binding site" evidence="1">
    <location>
        <position position="673"/>
    </location>
    <ligand>
        <name>Zn(2+)</name>
        <dbReference type="ChEBI" id="CHEBI:29105"/>
    </ligand>
</feature>
<comment type="function">
    <text evidence="1">Catalyzes the attachment of alanine to tRNA(Ala) in a two-step reaction: alanine is first activated by ATP to form Ala-AMP and then transferred to the acceptor end of tRNA(Ala). Also edits incorrectly charged Ser-tRNA(Ala) and Gly-tRNA(Ala) via its editing domain.</text>
</comment>
<comment type="catalytic activity">
    <reaction evidence="1">
        <text>tRNA(Ala) + L-alanine + ATP = L-alanyl-tRNA(Ala) + AMP + diphosphate</text>
        <dbReference type="Rhea" id="RHEA:12540"/>
        <dbReference type="Rhea" id="RHEA-COMP:9657"/>
        <dbReference type="Rhea" id="RHEA-COMP:9923"/>
        <dbReference type="ChEBI" id="CHEBI:30616"/>
        <dbReference type="ChEBI" id="CHEBI:33019"/>
        <dbReference type="ChEBI" id="CHEBI:57972"/>
        <dbReference type="ChEBI" id="CHEBI:78442"/>
        <dbReference type="ChEBI" id="CHEBI:78497"/>
        <dbReference type="ChEBI" id="CHEBI:456215"/>
        <dbReference type="EC" id="6.1.1.7"/>
    </reaction>
</comment>
<comment type="cofactor">
    <cofactor evidence="1">
        <name>Zn(2+)</name>
        <dbReference type="ChEBI" id="CHEBI:29105"/>
    </cofactor>
    <text evidence="1">Binds 1 zinc ion per subunit.</text>
</comment>
<comment type="subcellular location">
    <subcellularLocation>
        <location evidence="1">Cytoplasm</location>
    </subcellularLocation>
</comment>
<comment type="domain">
    <text evidence="1">Consists of three domains; the N-terminal catalytic domain, the editing domain and the C-terminal C-Ala domain. The editing domain removes incorrectly charged amino acids, while the C-Ala domain, along with tRNA(Ala), serves as a bridge to cooperatively bring together the editing and aminoacylation centers thus stimulating deacylation of misacylated tRNAs.</text>
</comment>
<comment type="similarity">
    <text evidence="1">Belongs to the class-II aminoacyl-tRNA synthetase family.</text>
</comment>
<keyword id="KW-0030">Aminoacyl-tRNA synthetase</keyword>
<keyword id="KW-0067">ATP-binding</keyword>
<keyword id="KW-0963">Cytoplasm</keyword>
<keyword id="KW-0436">Ligase</keyword>
<keyword id="KW-0479">Metal-binding</keyword>
<keyword id="KW-0547">Nucleotide-binding</keyword>
<keyword id="KW-0648">Protein biosynthesis</keyword>
<keyword id="KW-1185">Reference proteome</keyword>
<keyword id="KW-0694">RNA-binding</keyword>
<keyword id="KW-0820">tRNA-binding</keyword>
<keyword id="KW-0862">Zinc</keyword>
<sequence length="879" mass="95924">MKELTSSQIRQMYLDFFKSKGHTIEPSASLVPKDDPSLLWINSGVATMKKYFSGQVVPENPRLTSSQKSIRTNDIENVGKTARHHTLFEMLGNFSVGDYFKKEAIAWAWELLTSPDWFGWDPDKLYMTVYPKDTDAKDAWEAVGVAPDHIIAVEDNFWDIGEGPSGPDSEIFYDRGEAFNNLAADDPENYPGGENERYLEVWNIVFSQFNHEPDGTYKPLPRKNIDTGMGLERVVSIFQNAKTNFETDLFMPLIEKTAALSAGKHYGANAEDDISFKVIADHARAITFAIGDGALPGNEGRGYVIRRLIRRAIVNGQKLGIEGAFLDQLVPVVGQIMQAYYPEVLEQSDYIAKVVRSEEDRFGETLTDGLNLLNSLIADLKQQGGNQIAGADAFKLYDTYGFPVELTEEYADDQGITVDEAGFKAEMQKQKDRARNARGKQKAMGLQHDLLINVKTPSEYVGYTQLATTSKLTVLVAGDELVDHVTSGTAEAMFDVTPFYAEMGGQVADKGDILDEAGHVVAHVADVQHAPNGQNLHTLTVVAPMETGATYQLKVDTIFHSKVEKNHTATHLLDKALREVFGEHTQQAGSLVEGDYLRFDFTHFGQVDPADLAKAEALVNQKIFEELPVTTVETDIESAKKMGAIALFSEKYGKVVRVVSAGDFVTEFCGGNHVKNTNEIGLFKITSESGVGAGVRRIEAVTSAAAYAYLHDHDEILNAVGADLKVTQVDEIEQKVQALQAQVKALEQQQATLEGKLASQEAGAVFDHVTTAGNYQLISGTVQVSKMDQLRALADTWRDQALSDVLVLGAEVNGKANLIVAVSADKQKQVKAGDLIKAISPKINGGGGGRPNLAQAGGKNPAGLPDAMTAAADWLAEQK</sequence>
<evidence type="ECO:0000255" key="1">
    <source>
        <dbReference type="HAMAP-Rule" id="MF_00036"/>
    </source>
</evidence>
<proteinExistence type="inferred from homology"/>
<name>SYA_LEVBA</name>
<organism>
    <name type="scientific">Levilactobacillus brevis (strain ATCC 367 / BCRC 12310 / CIP 105137 / JCM 1170 / LMG 11437 / NCIMB 947 / NCTC 947)</name>
    <name type="common">Lactobacillus brevis</name>
    <dbReference type="NCBI Taxonomy" id="387344"/>
    <lineage>
        <taxon>Bacteria</taxon>
        <taxon>Bacillati</taxon>
        <taxon>Bacillota</taxon>
        <taxon>Bacilli</taxon>
        <taxon>Lactobacillales</taxon>
        <taxon>Lactobacillaceae</taxon>
        <taxon>Levilactobacillus</taxon>
    </lineage>
</organism>
<gene>
    <name evidence="1" type="primary">alaS</name>
    <name type="ordered locus">LVIS_1223</name>
</gene>
<reference key="1">
    <citation type="journal article" date="2006" name="Proc. Natl. Acad. Sci. U.S.A.">
        <title>Comparative genomics of the lactic acid bacteria.</title>
        <authorList>
            <person name="Makarova K.S."/>
            <person name="Slesarev A."/>
            <person name="Wolf Y.I."/>
            <person name="Sorokin A."/>
            <person name="Mirkin B."/>
            <person name="Koonin E.V."/>
            <person name="Pavlov A."/>
            <person name="Pavlova N."/>
            <person name="Karamychev V."/>
            <person name="Polouchine N."/>
            <person name="Shakhova V."/>
            <person name="Grigoriev I."/>
            <person name="Lou Y."/>
            <person name="Rohksar D."/>
            <person name="Lucas S."/>
            <person name="Huang K."/>
            <person name="Goodstein D.M."/>
            <person name="Hawkins T."/>
            <person name="Plengvidhya V."/>
            <person name="Welker D."/>
            <person name="Hughes J."/>
            <person name="Goh Y."/>
            <person name="Benson A."/>
            <person name="Baldwin K."/>
            <person name="Lee J.-H."/>
            <person name="Diaz-Muniz I."/>
            <person name="Dosti B."/>
            <person name="Smeianov V."/>
            <person name="Wechter W."/>
            <person name="Barabote R."/>
            <person name="Lorca G."/>
            <person name="Altermann E."/>
            <person name="Barrangou R."/>
            <person name="Ganesan B."/>
            <person name="Xie Y."/>
            <person name="Rawsthorne H."/>
            <person name="Tamir D."/>
            <person name="Parker C."/>
            <person name="Breidt F."/>
            <person name="Broadbent J.R."/>
            <person name="Hutkins R."/>
            <person name="O'Sullivan D."/>
            <person name="Steele J."/>
            <person name="Unlu G."/>
            <person name="Saier M.H. Jr."/>
            <person name="Klaenhammer T."/>
            <person name="Richardson P."/>
            <person name="Kozyavkin S."/>
            <person name="Weimer B.C."/>
            <person name="Mills D.A."/>
        </authorList>
    </citation>
    <scope>NUCLEOTIDE SEQUENCE [LARGE SCALE GENOMIC DNA]</scope>
    <source>
        <strain>ATCC 367 / BCRC 12310 / CIP 105137 / JCM 1170 / LMG 11437 / NCIMB 947 / NCTC 947</strain>
    </source>
</reference>
<protein>
    <recommendedName>
        <fullName evidence="1">Alanine--tRNA ligase</fullName>
        <ecNumber evidence="1">6.1.1.7</ecNumber>
    </recommendedName>
    <alternativeName>
        <fullName evidence="1">Alanyl-tRNA synthetase</fullName>
        <shortName evidence="1">AlaRS</shortName>
    </alternativeName>
</protein>